<dbReference type="EC" id="1.7.1.7" evidence="1"/>
<dbReference type="EMBL" id="CR954253">
    <property type="protein sequence ID" value="CAI97131.1"/>
    <property type="molecule type" value="Genomic_DNA"/>
</dbReference>
<dbReference type="RefSeq" id="WP_003622309.1">
    <property type="nucleotide sequence ID" value="NZ_JQAV01000010.1"/>
</dbReference>
<dbReference type="SMR" id="Q1GBV3"/>
<dbReference type="STRING" id="390333.Ldb0292"/>
<dbReference type="KEGG" id="ldb:Ldb0292"/>
<dbReference type="PATRIC" id="fig|390333.13.peg.492"/>
<dbReference type="eggNOG" id="COG0516">
    <property type="taxonomic scope" value="Bacteria"/>
</dbReference>
<dbReference type="HOGENOM" id="CLU_022552_5_0_9"/>
<dbReference type="BioCyc" id="LDEL390333:LDB_RS01195-MONOMER"/>
<dbReference type="Proteomes" id="UP000001259">
    <property type="component" value="Chromosome"/>
</dbReference>
<dbReference type="GO" id="GO:0005829">
    <property type="term" value="C:cytosol"/>
    <property type="evidence" value="ECO:0007669"/>
    <property type="project" value="TreeGrafter"/>
</dbReference>
<dbReference type="GO" id="GO:1902560">
    <property type="term" value="C:GMP reductase complex"/>
    <property type="evidence" value="ECO:0007669"/>
    <property type="project" value="InterPro"/>
</dbReference>
<dbReference type="GO" id="GO:0003920">
    <property type="term" value="F:GMP reductase activity"/>
    <property type="evidence" value="ECO:0007669"/>
    <property type="project" value="UniProtKB-UniRule"/>
</dbReference>
<dbReference type="GO" id="GO:0006163">
    <property type="term" value="P:purine nucleotide metabolic process"/>
    <property type="evidence" value="ECO:0007669"/>
    <property type="project" value="UniProtKB-UniRule"/>
</dbReference>
<dbReference type="CDD" id="cd00381">
    <property type="entry name" value="IMPDH"/>
    <property type="match status" value="1"/>
</dbReference>
<dbReference type="FunFam" id="3.20.20.70:FF:000424">
    <property type="entry name" value="Inosine-5'-monophosphate dehydrogenase 2"/>
    <property type="match status" value="1"/>
</dbReference>
<dbReference type="Gene3D" id="3.20.20.70">
    <property type="entry name" value="Aldolase class I"/>
    <property type="match status" value="1"/>
</dbReference>
<dbReference type="HAMAP" id="MF_01511">
    <property type="entry name" value="GMP_reduct_type2"/>
    <property type="match status" value="1"/>
</dbReference>
<dbReference type="InterPro" id="IPR013785">
    <property type="entry name" value="Aldolase_TIM"/>
</dbReference>
<dbReference type="InterPro" id="IPR050139">
    <property type="entry name" value="GMP_reductase"/>
</dbReference>
<dbReference type="InterPro" id="IPR005994">
    <property type="entry name" value="GuaC_type_2"/>
</dbReference>
<dbReference type="InterPro" id="IPR015875">
    <property type="entry name" value="IMP_DH/GMP_Rdtase_CS"/>
</dbReference>
<dbReference type="InterPro" id="IPR001093">
    <property type="entry name" value="IMP_DH_GMPRt"/>
</dbReference>
<dbReference type="NCBIfam" id="TIGR01306">
    <property type="entry name" value="GMP_reduct_2"/>
    <property type="match status" value="1"/>
</dbReference>
<dbReference type="NCBIfam" id="NF003966">
    <property type="entry name" value="PRK05458.1"/>
    <property type="match status" value="1"/>
</dbReference>
<dbReference type="PANTHER" id="PTHR43170">
    <property type="entry name" value="GMP REDUCTASE"/>
    <property type="match status" value="1"/>
</dbReference>
<dbReference type="PANTHER" id="PTHR43170:SF5">
    <property type="entry name" value="GMP REDUCTASE"/>
    <property type="match status" value="1"/>
</dbReference>
<dbReference type="Pfam" id="PF00478">
    <property type="entry name" value="IMPDH"/>
    <property type="match status" value="1"/>
</dbReference>
<dbReference type="PIRSF" id="PIRSF036500">
    <property type="entry name" value="GMP_red_Firmic"/>
    <property type="match status" value="1"/>
</dbReference>
<dbReference type="SMART" id="SM01240">
    <property type="entry name" value="IMPDH"/>
    <property type="match status" value="1"/>
</dbReference>
<dbReference type="SUPFAM" id="SSF51412">
    <property type="entry name" value="Inosine monophosphate dehydrogenase (IMPDH)"/>
    <property type="match status" value="1"/>
</dbReference>
<dbReference type="PROSITE" id="PS00487">
    <property type="entry name" value="IMP_DH_GMP_RED"/>
    <property type="match status" value="1"/>
</dbReference>
<protein>
    <recommendedName>
        <fullName evidence="1">GMP reductase</fullName>
        <ecNumber evidence="1">1.7.1.7</ecNumber>
    </recommendedName>
    <alternativeName>
        <fullName evidence="1">Guanosine 5'-monophosphate oxidoreductase</fullName>
        <shortName evidence="1">Guanosine monophosphate reductase</shortName>
    </alternativeName>
</protein>
<organism>
    <name type="scientific">Lactobacillus delbrueckii subsp. bulgaricus (strain ATCC 11842 / DSM 20081 / BCRC 10696 / JCM 1002 / NBRC 13953 / NCIMB 11778 / NCTC 12712 / WDCM 00102 / Lb 14)</name>
    <dbReference type="NCBI Taxonomy" id="390333"/>
    <lineage>
        <taxon>Bacteria</taxon>
        <taxon>Bacillati</taxon>
        <taxon>Bacillota</taxon>
        <taxon>Bacilli</taxon>
        <taxon>Lactobacillales</taxon>
        <taxon>Lactobacillaceae</taxon>
        <taxon>Lactobacillus</taxon>
    </lineage>
</organism>
<keyword id="KW-0521">NADP</keyword>
<keyword id="KW-0560">Oxidoreductase</keyword>
<keyword id="KW-1185">Reference proteome</keyword>
<evidence type="ECO:0000255" key="1">
    <source>
        <dbReference type="HAMAP-Rule" id="MF_01511"/>
    </source>
</evidence>
<comment type="function">
    <text evidence="1">Catalyzes the irreversible NADPH-dependent deamination of GMP to IMP. It functions in the conversion of nucleobase, nucleoside and nucleotide derivatives of G to A nucleotides, and in maintaining the intracellular balance of A and G nucleotides.</text>
</comment>
<comment type="catalytic activity">
    <reaction evidence="1">
        <text>IMP + NH4(+) + NADP(+) = GMP + NADPH + 2 H(+)</text>
        <dbReference type="Rhea" id="RHEA:17185"/>
        <dbReference type="ChEBI" id="CHEBI:15378"/>
        <dbReference type="ChEBI" id="CHEBI:28938"/>
        <dbReference type="ChEBI" id="CHEBI:57783"/>
        <dbReference type="ChEBI" id="CHEBI:58053"/>
        <dbReference type="ChEBI" id="CHEBI:58115"/>
        <dbReference type="ChEBI" id="CHEBI:58349"/>
        <dbReference type="EC" id="1.7.1.7"/>
    </reaction>
</comment>
<comment type="similarity">
    <text evidence="1">Belongs to the IMPDH/GMPR family. GuaC type 2 subfamily.</text>
</comment>
<proteinExistence type="inferred from homology"/>
<sequence length="330" mass="36703">MNNYFSMEAFDYDDIQLVPNKAIVKSRKECVTSVKFGNRTFKIPVVPANMESVIDEKLAVWLAQNGYYYVMHRFQPEKRADFIKMMHEKGLFASISVGIKDDEYDFIDELVEKDLIPEYTTIDVAHGHSVYVIDMIKYIKEKMPDTFLTAGNVATPEAVRELENAGADATKVGVGPGKACITKLKTGFGTGGWQLAALRMCSKVARKPLIADGGIRHNGDIAKSVRFGASMVMIGSMLAGHEESPGNVIKIDGKTYKQYWGSASEVQKGAYRNVEGKQMLVPYRGSIANTLEEMKEDLQSSISYAGGRDLESIKRVDYVIVKNTIMNGDY</sequence>
<feature type="chain" id="PRO_0000294273" description="GMP reductase">
    <location>
        <begin position="1"/>
        <end position="330"/>
    </location>
</feature>
<feature type="active site" description="Thioimidate intermediate" evidence="1">
    <location>
        <position position="180"/>
    </location>
</feature>
<feature type="binding site" evidence="1">
    <location>
        <begin position="209"/>
        <end position="232"/>
    </location>
    <ligand>
        <name>NADP(+)</name>
        <dbReference type="ChEBI" id="CHEBI:58349"/>
    </ligand>
</feature>
<name>GUAC_LACDA</name>
<reference key="1">
    <citation type="journal article" date="2006" name="Proc. Natl. Acad. Sci. U.S.A.">
        <title>The complete genome sequence of Lactobacillus bulgaricus reveals extensive and ongoing reductive evolution.</title>
        <authorList>
            <person name="van de Guchte M."/>
            <person name="Penaud S."/>
            <person name="Grimaldi C."/>
            <person name="Barbe V."/>
            <person name="Bryson K."/>
            <person name="Nicolas P."/>
            <person name="Robert C."/>
            <person name="Oztas S."/>
            <person name="Mangenot S."/>
            <person name="Couloux A."/>
            <person name="Loux V."/>
            <person name="Dervyn R."/>
            <person name="Bossy R."/>
            <person name="Bolotin A."/>
            <person name="Batto J.-M."/>
            <person name="Walunas T."/>
            <person name="Gibrat J.-F."/>
            <person name="Bessieres P."/>
            <person name="Weissenbach J."/>
            <person name="Ehrlich S.D."/>
            <person name="Maguin E."/>
        </authorList>
    </citation>
    <scope>NUCLEOTIDE SEQUENCE [LARGE SCALE GENOMIC DNA]</scope>
    <source>
        <strain>ATCC 11842 / DSM 20081 / BCRC 10696 / JCM 1002 / NBRC 13953 / NCIMB 11778 / NCTC 12712 / WDCM 00102 / Lb 14</strain>
    </source>
</reference>
<gene>
    <name evidence="1" type="primary">guaC</name>
    <name type="ordered locus">Ldb0292</name>
</gene>
<accession>Q1GBV3</accession>